<feature type="chain" id="PRO_1000140825" description="Small ribosomal subunit protein uS5">
    <location>
        <begin position="1"/>
        <end position="177"/>
    </location>
</feature>
<feature type="domain" description="S5 DRBM" evidence="1">
    <location>
        <begin position="19"/>
        <end position="82"/>
    </location>
</feature>
<reference key="1">
    <citation type="journal article" date="2008" name="Proc. Natl. Acad. Sci. U.S.A.">
        <title>Niche adaptation and genome expansion in the chlorophyll d-producing cyanobacterium Acaryochloris marina.</title>
        <authorList>
            <person name="Swingley W.D."/>
            <person name="Chen M."/>
            <person name="Cheung P.C."/>
            <person name="Conrad A.L."/>
            <person name="Dejesa L.C."/>
            <person name="Hao J."/>
            <person name="Honchak B.M."/>
            <person name="Karbach L.E."/>
            <person name="Kurdoglu A."/>
            <person name="Lahiri S."/>
            <person name="Mastrian S.D."/>
            <person name="Miyashita H."/>
            <person name="Page L."/>
            <person name="Ramakrishna P."/>
            <person name="Satoh S."/>
            <person name="Sattley W.M."/>
            <person name="Shimada Y."/>
            <person name="Taylor H.L."/>
            <person name="Tomo T."/>
            <person name="Tsuchiya T."/>
            <person name="Wang Z.T."/>
            <person name="Raymond J."/>
            <person name="Mimuro M."/>
            <person name="Blankenship R.E."/>
            <person name="Touchman J.W."/>
        </authorList>
    </citation>
    <scope>NUCLEOTIDE SEQUENCE [LARGE SCALE GENOMIC DNA]</scope>
    <source>
        <strain>MBIC 11017</strain>
    </source>
</reference>
<name>RS5_ACAM1</name>
<sequence length="177" mass="18795">MAKENRRKNNRNKEKDSTWQERVVQIRRVSKVVKGGKKLSFRAIVVVGNERGQVGVGVGKASDVIGAVRKGVADGKKQLVEVPLTRSNSIPHPMIGRGGAAKVMMRPAAPGTGVIAGGAVRTVLELAGVRNVLAKQLGSDNPLNNARATLHALASLRTFSEVAGERGIEVEKLYAAT</sequence>
<evidence type="ECO:0000255" key="1">
    <source>
        <dbReference type="HAMAP-Rule" id="MF_01307"/>
    </source>
</evidence>
<evidence type="ECO:0000305" key="2"/>
<keyword id="KW-1185">Reference proteome</keyword>
<keyword id="KW-0687">Ribonucleoprotein</keyword>
<keyword id="KW-0689">Ribosomal protein</keyword>
<keyword id="KW-0694">RNA-binding</keyword>
<keyword id="KW-0699">rRNA-binding</keyword>
<proteinExistence type="inferred from homology"/>
<accession>B0C1E9</accession>
<comment type="function">
    <text evidence="1">With S4 and S12 plays an important role in translational accuracy.</text>
</comment>
<comment type="function">
    <text evidence="1">Located at the back of the 30S subunit body where it stabilizes the conformation of the head with respect to the body.</text>
</comment>
<comment type="subunit">
    <text evidence="1">Part of the 30S ribosomal subunit. Contacts proteins S4 and S8.</text>
</comment>
<comment type="domain">
    <text>The N-terminal domain interacts with the head of the 30S subunit; the C-terminal domain interacts with the body and contacts protein S4. The interaction surface between S4 and S5 is involved in control of translational fidelity.</text>
</comment>
<comment type="similarity">
    <text evidence="1">Belongs to the universal ribosomal protein uS5 family.</text>
</comment>
<dbReference type="EMBL" id="CP000828">
    <property type="protein sequence ID" value="ABW29684.1"/>
    <property type="molecule type" value="Genomic_DNA"/>
</dbReference>
<dbReference type="RefSeq" id="WP_012164971.1">
    <property type="nucleotide sequence ID" value="NC_009925.1"/>
</dbReference>
<dbReference type="SMR" id="B0C1E9"/>
<dbReference type="STRING" id="329726.AM1_4712"/>
<dbReference type="KEGG" id="amr:AM1_4712"/>
<dbReference type="eggNOG" id="COG0098">
    <property type="taxonomic scope" value="Bacteria"/>
</dbReference>
<dbReference type="HOGENOM" id="CLU_065898_2_2_3"/>
<dbReference type="OrthoDB" id="9809045at2"/>
<dbReference type="Proteomes" id="UP000000268">
    <property type="component" value="Chromosome"/>
</dbReference>
<dbReference type="GO" id="GO:0015935">
    <property type="term" value="C:small ribosomal subunit"/>
    <property type="evidence" value="ECO:0007669"/>
    <property type="project" value="InterPro"/>
</dbReference>
<dbReference type="GO" id="GO:0019843">
    <property type="term" value="F:rRNA binding"/>
    <property type="evidence" value="ECO:0007669"/>
    <property type="project" value="UniProtKB-UniRule"/>
</dbReference>
<dbReference type="GO" id="GO:0003735">
    <property type="term" value="F:structural constituent of ribosome"/>
    <property type="evidence" value="ECO:0007669"/>
    <property type="project" value="InterPro"/>
</dbReference>
<dbReference type="GO" id="GO:0006412">
    <property type="term" value="P:translation"/>
    <property type="evidence" value="ECO:0007669"/>
    <property type="project" value="UniProtKB-UniRule"/>
</dbReference>
<dbReference type="FunFam" id="3.30.160.20:FF:000001">
    <property type="entry name" value="30S ribosomal protein S5"/>
    <property type="match status" value="1"/>
</dbReference>
<dbReference type="FunFam" id="3.30.230.10:FF:000002">
    <property type="entry name" value="30S ribosomal protein S5"/>
    <property type="match status" value="1"/>
</dbReference>
<dbReference type="Gene3D" id="3.30.160.20">
    <property type="match status" value="1"/>
</dbReference>
<dbReference type="Gene3D" id="3.30.230.10">
    <property type="match status" value="1"/>
</dbReference>
<dbReference type="HAMAP" id="MF_01307_B">
    <property type="entry name" value="Ribosomal_uS5_B"/>
    <property type="match status" value="1"/>
</dbReference>
<dbReference type="InterPro" id="IPR020568">
    <property type="entry name" value="Ribosomal_Su5_D2-typ_SF"/>
</dbReference>
<dbReference type="InterPro" id="IPR000851">
    <property type="entry name" value="Ribosomal_uS5"/>
</dbReference>
<dbReference type="InterPro" id="IPR005712">
    <property type="entry name" value="Ribosomal_uS5_bac-type"/>
</dbReference>
<dbReference type="InterPro" id="IPR005324">
    <property type="entry name" value="Ribosomal_uS5_C"/>
</dbReference>
<dbReference type="InterPro" id="IPR013810">
    <property type="entry name" value="Ribosomal_uS5_N"/>
</dbReference>
<dbReference type="InterPro" id="IPR018192">
    <property type="entry name" value="Ribosomal_uS5_N_CS"/>
</dbReference>
<dbReference type="InterPro" id="IPR014721">
    <property type="entry name" value="Ribsml_uS5_D2-typ_fold_subgr"/>
</dbReference>
<dbReference type="NCBIfam" id="TIGR01021">
    <property type="entry name" value="rpsE_bact"/>
    <property type="match status" value="1"/>
</dbReference>
<dbReference type="PANTHER" id="PTHR48277">
    <property type="entry name" value="MITOCHONDRIAL RIBOSOMAL PROTEIN S5"/>
    <property type="match status" value="1"/>
</dbReference>
<dbReference type="PANTHER" id="PTHR48277:SF1">
    <property type="entry name" value="MITOCHONDRIAL RIBOSOMAL PROTEIN S5"/>
    <property type="match status" value="1"/>
</dbReference>
<dbReference type="Pfam" id="PF00333">
    <property type="entry name" value="Ribosomal_S5"/>
    <property type="match status" value="1"/>
</dbReference>
<dbReference type="Pfam" id="PF03719">
    <property type="entry name" value="Ribosomal_S5_C"/>
    <property type="match status" value="1"/>
</dbReference>
<dbReference type="SUPFAM" id="SSF54768">
    <property type="entry name" value="dsRNA-binding domain-like"/>
    <property type="match status" value="1"/>
</dbReference>
<dbReference type="SUPFAM" id="SSF54211">
    <property type="entry name" value="Ribosomal protein S5 domain 2-like"/>
    <property type="match status" value="1"/>
</dbReference>
<dbReference type="PROSITE" id="PS00585">
    <property type="entry name" value="RIBOSOMAL_S5"/>
    <property type="match status" value="1"/>
</dbReference>
<dbReference type="PROSITE" id="PS50881">
    <property type="entry name" value="S5_DSRBD"/>
    <property type="match status" value="1"/>
</dbReference>
<organism>
    <name type="scientific">Acaryochloris marina (strain MBIC 11017)</name>
    <dbReference type="NCBI Taxonomy" id="329726"/>
    <lineage>
        <taxon>Bacteria</taxon>
        <taxon>Bacillati</taxon>
        <taxon>Cyanobacteriota</taxon>
        <taxon>Cyanophyceae</taxon>
        <taxon>Acaryochloridales</taxon>
        <taxon>Acaryochloridaceae</taxon>
        <taxon>Acaryochloris</taxon>
    </lineage>
</organism>
<gene>
    <name evidence="1" type="primary">rpsE</name>
    <name evidence="1" type="synonym">rps5</name>
    <name type="ordered locus">AM1_4712</name>
</gene>
<protein>
    <recommendedName>
        <fullName evidence="1">Small ribosomal subunit protein uS5</fullName>
    </recommendedName>
    <alternativeName>
        <fullName evidence="2">30S ribosomal protein S5</fullName>
    </alternativeName>
</protein>